<sequence length="58" mass="6924">MSKIVVRKNESLDDALRRFKRSVTKAGTLQEARKREHYEKPSVKRKRKSEAARKRKKI</sequence>
<evidence type="ECO:0000255" key="1">
    <source>
        <dbReference type="HAMAP-Rule" id="MF_00358"/>
    </source>
</evidence>
<evidence type="ECO:0000256" key="2">
    <source>
        <dbReference type="SAM" id="MobiDB-lite"/>
    </source>
</evidence>
<evidence type="ECO:0000305" key="3"/>
<name>RS21_STRT1</name>
<protein>
    <recommendedName>
        <fullName evidence="1">Small ribosomal subunit protein bS21</fullName>
    </recommendedName>
    <alternativeName>
        <fullName evidence="3">30S ribosomal protein S21</fullName>
    </alternativeName>
</protein>
<feature type="chain" id="PRO_0000266783" description="Small ribosomal subunit protein bS21">
    <location>
        <begin position="1"/>
        <end position="58"/>
    </location>
</feature>
<feature type="region of interest" description="Disordered" evidence="2">
    <location>
        <begin position="24"/>
        <end position="58"/>
    </location>
</feature>
<feature type="compositionally biased region" description="Basic and acidic residues" evidence="2">
    <location>
        <begin position="31"/>
        <end position="42"/>
    </location>
</feature>
<feature type="compositionally biased region" description="Basic residues" evidence="2">
    <location>
        <begin position="43"/>
        <end position="58"/>
    </location>
</feature>
<dbReference type="EMBL" id="CP000024">
    <property type="protein sequence ID" value="AAV63021.1"/>
    <property type="status" value="ALT_INIT"/>
    <property type="molecule type" value="Genomic_DNA"/>
</dbReference>
<dbReference type="RefSeq" id="WP_011226340.1">
    <property type="nucleotide sequence ID" value="NC_006449.1"/>
</dbReference>
<dbReference type="SMR" id="Q5LYS8"/>
<dbReference type="GeneID" id="66899238"/>
<dbReference type="KEGG" id="stc:str1490"/>
<dbReference type="HOGENOM" id="CLU_159258_3_2_9"/>
<dbReference type="GO" id="GO:1990904">
    <property type="term" value="C:ribonucleoprotein complex"/>
    <property type="evidence" value="ECO:0007669"/>
    <property type="project" value="UniProtKB-KW"/>
</dbReference>
<dbReference type="GO" id="GO:0005840">
    <property type="term" value="C:ribosome"/>
    <property type="evidence" value="ECO:0007669"/>
    <property type="project" value="UniProtKB-KW"/>
</dbReference>
<dbReference type="GO" id="GO:0003735">
    <property type="term" value="F:structural constituent of ribosome"/>
    <property type="evidence" value="ECO:0007669"/>
    <property type="project" value="InterPro"/>
</dbReference>
<dbReference type="GO" id="GO:0006412">
    <property type="term" value="P:translation"/>
    <property type="evidence" value="ECO:0007669"/>
    <property type="project" value="UniProtKB-UniRule"/>
</dbReference>
<dbReference type="Gene3D" id="1.20.5.1150">
    <property type="entry name" value="Ribosomal protein S8"/>
    <property type="match status" value="1"/>
</dbReference>
<dbReference type="HAMAP" id="MF_00358">
    <property type="entry name" value="Ribosomal_bS21"/>
    <property type="match status" value="1"/>
</dbReference>
<dbReference type="InterPro" id="IPR001911">
    <property type="entry name" value="Ribosomal_bS21"/>
</dbReference>
<dbReference type="InterPro" id="IPR018278">
    <property type="entry name" value="Ribosomal_bS21_CS"/>
</dbReference>
<dbReference type="InterPro" id="IPR038380">
    <property type="entry name" value="Ribosomal_bS21_sf"/>
</dbReference>
<dbReference type="NCBIfam" id="TIGR00030">
    <property type="entry name" value="S21p"/>
    <property type="match status" value="1"/>
</dbReference>
<dbReference type="PANTHER" id="PTHR21109">
    <property type="entry name" value="MITOCHONDRIAL 28S RIBOSOMAL PROTEIN S21"/>
    <property type="match status" value="1"/>
</dbReference>
<dbReference type="PANTHER" id="PTHR21109:SF22">
    <property type="entry name" value="SMALL RIBOSOMAL SUBUNIT PROTEIN BS21"/>
    <property type="match status" value="1"/>
</dbReference>
<dbReference type="Pfam" id="PF01165">
    <property type="entry name" value="Ribosomal_S21"/>
    <property type="match status" value="1"/>
</dbReference>
<dbReference type="PRINTS" id="PR00976">
    <property type="entry name" value="RIBOSOMALS21"/>
</dbReference>
<dbReference type="PROSITE" id="PS01181">
    <property type="entry name" value="RIBOSOMAL_S21"/>
    <property type="match status" value="1"/>
</dbReference>
<organism>
    <name type="scientific">Streptococcus thermophilus (strain CNRZ 1066)</name>
    <dbReference type="NCBI Taxonomy" id="299768"/>
    <lineage>
        <taxon>Bacteria</taxon>
        <taxon>Bacillati</taxon>
        <taxon>Bacillota</taxon>
        <taxon>Bacilli</taxon>
        <taxon>Lactobacillales</taxon>
        <taxon>Streptococcaceae</taxon>
        <taxon>Streptococcus</taxon>
    </lineage>
</organism>
<reference key="1">
    <citation type="journal article" date="2004" name="Nat. Biotechnol.">
        <title>Complete sequence and comparative genome analysis of the dairy bacterium Streptococcus thermophilus.</title>
        <authorList>
            <person name="Bolotin A."/>
            <person name="Quinquis B."/>
            <person name="Renault P."/>
            <person name="Sorokin A."/>
            <person name="Ehrlich S.D."/>
            <person name="Kulakauskas S."/>
            <person name="Lapidus A."/>
            <person name="Goltsman E."/>
            <person name="Mazur M."/>
            <person name="Pusch G.D."/>
            <person name="Fonstein M."/>
            <person name="Overbeek R."/>
            <person name="Kyprides N."/>
            <person name="Purnelle B."/>
            <person name="Prozzi D."/>
            <person name="Ngui K."/>
            <person name="Masuy D."/>
            <person name="Hancy F."/>
            <person name="Burteau S."/>
            <person name="Boutry M."/>
            <person name="Delcour J."/>
            <person name="Goffeau A."/>
            <person name="Hols P."/>
        </authorList>
    </citation>
    <scope>NUCLEOTIDE SEQUENCE [LARGE SCALE GENOMIC DNA]</scope>
    <source>
        <strain>CNRZ 1066</strain>
    </source>
</reference>
<comment type="similarity">
    <text evidence="1">Belongs to the bacterial ribosomal protein bS21 family.</text>
</comment>
<comment type="sequence caution" evidence="3">
    <conflict type="erroneous initiation">
        <sequence resource="EMBL-CDS" id="AAV63021"/>
    </conflict>
</comment>
<gene>
    <name evidence="1" type="primary">rpsU</name>
    <name type="ordered locus">str1490</name>
</gene>
<accession>Q5LYS8</accession>
<proteinExistence type="inferred from homology"/>
<keyword id="KW-0687">Ribonucleoprotein</keyword>
<keyword id="KW-0689">Ribosomal protein</keyword>